<dbReference type="EMBL" id="AE008691">
    <property type="protein sequence ID" value="AAM25150.1"/>
    <property type="molecule type" value="Genomic_DNA"/>
</dbReference>
<dbReference type="RefSeq" id="WP_011026106.1">
    <property type="nucleotide sequence ID" value="NC_003869.1"/>
</dbReference>
<dbReference type="SMR" id="Q8R8M4"/>
<dbReference type="STRING" id="273068.TTE1971"/>
<dbReference type="KEGG" id="tte:TTE1971"/>
<dbReference type="eggNOG" id="COG0556">
    <property type="taxonomic scope" value="Bacteria"/>
</dbReference>
<dbReference type="HOGENOM" id="CLU_009621_2_1_9"/>
<dbReference type="OrthoDB" id="9806651at2"/>
<dbReference type="Proteomes" id="UP000000555">
    <property type="component" value="Chromosome"/>
</dbReference>
<dbReference type="GO" id="GO:0005737">
    <property type="term" value="C:cytoplasm"/>
    <property type="evidence" value="ECO:0007669"/>
    <property type="project" value="UniProtKB-SubCell"/>
</dbReference>
<dbReference type="GO" id="GO:0009380">
    <property type="term" value="C:excinuclease repair complex"/>
    <property type="evidence" value="ECO:0007669"/>
    <property type="project" value="InterPro"/>
</dbReference>
<dbReference type="GO" id="GO:0005524">
    <property type="term" value="F:ATP binding"/>
    <property type="evidence" value="ECO:0007669"/>
    <property type="project" value="UniProtKB-UniRule"/>
</dbReference>
<dbReference type="GO" id="GO:0016887">
    <property type="term" value="F:ATP hydrolysis activity"/>
    <property type="evidence" value="ECO:0007669"/>
    <property type="project" value="InterPro"/>
</dbReference>
<dbReference type="GO" id="GO:0003677">
    <property type="term" value="F:DNA binding"/>
    <property type="evidence" value="ECO:0007669"/>
    <property type="project" value="UniProtKB-UniRule"/>
</dbReference>
<dbReference type="GO" id="GO:0009381">
    <property type="term" value="F:excinuclease ABC activity"/>
    <property type="evidence" value="ECO:0007669"/>
    <property type="project" value="UniProtKB-UniRule"/>
</dbReference>
<dbReference type="GO" id="GO:0006289">
    <property type="term" value="P:nucleotide-excision repair"/>
    <property type="evidence" value="ECO:0007669"/>
    <property type="project" value="UniProtKB-UniRule"/>
</dbReference>
<dbReference type="GO" id="GO:0009432">
    <property type="term" value="P:SOS response"/>
    <property type="evidence" value="ECO:0007669"/>
    <property type="project" value="UniProtKB-UniRule"/>
</dbReference>
<dbReference type="CDD" id="cd17916">
    <property type="entry name" value="DEXHc_UvrB"/>
    <property type="match status" value="1"/>
</dbReference>
<dbReference type="CDD" id="cd18790">
    <property type="entry name" value="SF2_C_UvrB"/>
    <property type="match status" value="1"/>
</dbReference>
<dbReference type="Gene3D" id="3.40.50.300">
    <property type="entry name" value="P-loop containing nucleotide triphosphate hydrolases"/>
    <property type="match status" value="3"/>
</dbReference>
<dbReference type="Gene3D" id="4.10.860.10">
    <property type="entry name" value="UVR domain"/>
    <property type="match status" value="1"/>
</dbReference>
<dbReference type="HAMAP" id="MF_00204">
    <property type="entry name" value="UvrB"/>
    <property type="match status" value="1"/>
</dbReference>
<dbReference type="InterPro" id="IPR006935">
    <property type="entry name" value="Helicase/UvrB_N"/>
</dbReference>
<dbReference type="InterPro" id="IPR014001">
    <property type="entry name" value="Helicase_ATP-bd"/>
</dbReference>
<dbReference type="InterPro" id="IPR001650">
    <property type="entry name" value="Helicase_C-like"/>
</dbReference>
<dbReference type="InterPro" id="IPR027417">
    <property type="entry name" value="P-loop_NTPase"/>
</dbReference>
<dbReference type="InterPro" id="IPR001943">
    <property type="entry name" value="UVR_dom"/>
</dbReference>
<dbReference type="InterPro" id="IPR036876">
    <property type="entry name" value="UVR_dom_sf"/>
</dbReference>
<dbReference type="InterPro" id="IPR004807">
    <property type="entry name" value="UvrB"/>
</dbReference>
<dbReference type="InterPro" id="IPR041471">
    <property type="entry name" value="UvrB_inter"/>
</dbReference>
<dbReference type="InterPro" id="IPR024759">
    <property type="entry name" value="UvrB_YAD/RRR_dom"/>
</dbReference>
<dbReference type="NCBIfam" id="NF003673">
    <property type="entry name" value="PRK05298.1"/>
    <property type="match status" value="1"/>
</dbReference>
<dbReference type="NCBIfam" id="TIGR00631">
    <property type="entry name" value="uvrb"/>
    <property type="match status" value="1"/>
</dbReference>
<dbReference type="PANTHER" id="PTHR24029">
    <property type="entry name" value="UVRABC SYSTEM PROTEIN B"/>
    <property type="match status" value="1"/>
</dbReference>
<dbReference type="PANTHER" id="PTHR24029:SF0">
    <property type="entry name" value="UVRABC SYSTEM PROTEIN B"/>
    <property type="match status" value="1"/>
</dbReference>
<dbReference type="Pfam" id="PF00271">
    <property type="entry name" value="Helicase_C"/>
    <property type="match status" value="1"/>
</dbReference>
<dbReference type="Pfam" id="PF04851">
    <property type="entry name" value="ResIII"/>
    <property type="match status" value="1"/>
</dbReference>
<dbReference type="Pfam" id="PF02151">
    <property type="entry name" value="UVR"/>
    <property type="match status" value="1"/>
</dbReference>
<dbReference type="Pfam" id="PF12344">
    <property type="entry name" value="UvrB"/>
    <property type="match status" value="1"/>
</dbReference>
<dbReference type="Pfam" id="PF17757">
    <property type="entry name" value="UvrB_inter"/>
    <property type="match status" value="1"/>
</dbReference>
<dbReference type="SMART" id="SM00487">
    <property type="entry name" value="DEXDc"/>
    <property type="match status" value="1"/>
</dbReference>
<dbReference type="SMART" id="SM00490">
    <property type="entry name" value="HELICc"/>
    <property type="match status" value="1"/>
</dbReference>
<dbReference type="SUPFAM" id="SSF46600">
    <property type="entry name" value="C-terminal UvrC-binding domain of UvrB"/>
    <property type="match status" value="1"/>
</dbReference>
<dbReference type="SUPFAM" id="SSF52540">
    <property type="entry name" value="P-loop containing nucleoside triphosphate hydrolases"/>
    <property type="match status" value="2"/>
</dbReference>
<dbReference type="PROSITE" id="PS51192">
    <property type="entry name" value="HELICASE_ATP_BIND_1"/>
    <property type="match status" value="1"/>
</dbReference>
<dbReference type="PROSITE" id="PS51194">
    <property type="entry name" value="HELICASE_CTER"/>
    <property type="match status" value="1"/>
</dbReference>
<dbReference type="PROSITE" id="PS50151">
    <property type="entry name" value="UVR"/>
    <property type="match status" value="1"/>
</dbReference>
<feature type="chain" id="PRO_0000138441" description="UvrABC system protein B">
    <location>
        <begin position="1"/>
        <end position="662"/>
    </location>
</feature>
<feature type="domain" description="Helicase ATP-binding" evidence="1">
    <location>
        <begin position="25"/>
        <end position="412"/>
    </location>
</feature>
<feature type="domain" description="Helicase C-terminal" evidence="1">
    <location>
        <begin position="429"/>
        <end position="595"/>
    </location>
</feature>
<feature type="domain" description="UVR" evidence="1">
    <location>
        <begin position="620"/>
        <end position="655"/>
    </location>
</feature>
<feature type="short sequence motif" description="Beta-hairpin">
    <location>
        <begin position="91"/>
        <end position="114"/>
    </location>
</feature>
<feature type="binding site" evidence="1">
    <location>
        <begin position="38"/>
        <end position="45"/>
    </location>
    <ligand>
        <name>ATP</name>
        <dbReference type="ChEBI" id="CHEBI:30616"/>
    </ligand>
</feature>
<protein>
    <recommendedName>
        <fullName evidence="1">UvrABC system protein B</fullName>
        <shortName evidence="1">Protein UvrB</shortName>
    </recommendedName>
    <alternativeName>
        <fullName evidence="1">Excinuclease ABC subunit B</fullName>
    </alternativeName>
</protein>
<keyword id="KW-0067">ATP-binding</keyword>
<keyword id="KW-0963">Cytoplasm</keyword>
<keyword id="KW-0227">DNA damage</keyword>
<keyword id="KW-0228">DNA excision</keyword>
<keyword id="KW-0234">DNA repair</keyword>
<keyword id="KW-0267">Excision nuclease</keyword>
<keyword id="KW-0547">Nucleotide-binding</keyword>
<keyword id="KW-1185">Reference proteome</keyword>
<keyword id="KW-0742">SOS response</keyword>
<reference key="1">
    <citation type="journal article" date="2002" name="Genome Res.">
        <title>A complete sequence of the T. tengcongensis genome.</title>
        <authorList>
            <person name="Bao Q."/>
            <person name="Tian Y."/>
            <person name="Li W."/>
            <person name="Xu Z."/>
            <person name="Xuan Z."/>
            <person name="Hu S."/>
            <person name="Dong W."/>
            <person name="Yang J."/>
            <person name="Chen Y."/>
            <person name="Xue Y."/>
            <person name="Xu Y."/>
            <person name="Lai X."/>
            <person name="Huang L."/>
            <person name="Dong X."/>
            <person name="Ma Y."/>
            <person name="Ling L."/>
            <person name="Tan H."/>
            <person name="Chen R."/>
            <person name="Wang J."/>
            <person name="Yu J."/>
            <person name="Yang H."/>
        </authorList>
    </citation>
    <scope>NUCLEOTIDE SEQUENCE [LARGE SCALE GENOMIC DNA]</scope>
    <source>
        <strain>DSM 15242 / JCM 11007 / NBRC 100824 / MB4</strain>
    </source>
</reference>
<accession>Q8R8M4</accession>
<sequence>MGGFKLVSNFKPTGDQPQAIEKLVEGVRRGYRYQTLLGVTGSGKTFTMANIIARLNRPTLVIAHNKTLAAQLYSEFKEFFPENAVEYFVSYYDYYQPEAYVPETDTYIEKDASINEEIDKLRHSATAALFERRDVIIVASVSCIYGLGDPIDYENLMLSLRPGMVKDRDEIIRKLVEIQYERNDINFTRGKFRVRGDVIEVFPASFSNKAIRIELFGDEIDRIAEIDVLTGEVLGYRKHVAIFPASHYATSRDKLERAIKSIREELEERYKELKEMGKIVEAERLWQRTNYDLEMLQEMGYCKGIENYSRHISGRPPGSPPYTLLDYFPEDFLIFIDESHVTIPQLRGMYNGDRSRKEALVEYGFRLPSAYDNRPLTFEEFEQRVNQVIFVSATPGPYEMEHSEQVVEQLIRPTGLVDPEVIVRPVKGQVDDLIAEIRKTVAKGYRVLVTTLTKKMAEDLSDYLKEMGIRVRYLHSDIETIERVEIIRDLRLGKFDVLIGINLLREGLDIPEVALVAILDADKEGFLRSETSLIQTIGRAARNAEGRVIMYADTITNSMRRAIDETNRRRKIQMEYNEKHGIVPKTVVKGVRDVIQATQVAEKEEKYEKTANFYDPDVIKSTIEQLEKEMRQAAIELQFEKAAKLRDMILELRKQLEEVSLR</sequence>
<organism>
    <name type="scientific">Caldanaerobacter subterraneus subsp. tengcongensis (strain DSM 15242 / JCM 11007 / NBRC 100824 / MB4)</name>
    <name type="common">Thermoanaerobacter tengcongensis</name>
    <dbReference type="NCBI Taxonomy" id="273068"/>
    <lineage>
        <taxon>Bacteria</taxon>
        <taxon>Bacillati</taxon>
        <taxon>Bacillota</taxon>
        <taxon>Clostridia</taxon>
        <taxon>Thermoanaerobacterales</taxon>
        <taxon>Thermoanaerobacteraceae</taxon>
        <taxon>Caldanaerobacter</taxon>
    </lineage>
</organism>
<name>UVRB_CALS4</name>
<comment type="function">
    <text evidence="1">The UvrABC repair system catalyzes the recognition and processing of DNA lesions. A damage recognition complex composed of 2 UvrA and 2 UvrB subunits scans DNA for abnormalities. Upon binding of the UvrA(2)B(2) complex to a putative damaged site, the DNA wraps around one UvrB monomer. DNA wrap is dependent on ATP binding by UvrB and probably causes local melting of the DNA helix, facilitating insertion of UvrB beta-hairpin between the DNA strands. Then UvrB probes one DNA strand for the presence of a lesion. If a lesion is found the UvrA subunits dissociate and the UvrB-DNA preincision complex is formed. This complex is subsequently bound by UvrC and the second UvrB is released. If no lesion is found, the DNA wraps around the other UvrB subunit that will check the other stand for damage.</text>
</comment>
<comment type="subunit">
    <text evidence="1">Forms a heterotetramer with UvrA during the search for lesions. Interacts with UvrC in an incision complex.</text>
</comment>
<comment type="subcellular location">
    <subcellularLocation>
        <location evidence="1">Cytoplasm</location>
    </subcellularLocation>
</comment>
<comment type="similarity">
    <text evidence="1">Belongs to the UvrB family.</text>
</comment>
<gene>
    <name evidence="1" type="primary">uvrB</name>
    <name type="ordered locus">TTE1971</name>
</gene>
<proteinExistence type="inferred from homology"/>
<evidence type="ECO:0000255" key="1">
    <source>
        <dbReference type="HAMAP-Rule" id="MF_00204"/>
    </source>
</evidence>